<reference key="1">
    <citation type="journal article" date="2006" name="BMC Plant Biol.">
        <title>Rapid and accurate pyrosequencing of angiosperm plastid genomes.</title>
        <authorList>
            <person name="Moore M.J."/>
            <person name="Dhingra A."/>
            <person name="Soltis P.S."/>
            <person name="Shaw R."/>
            <person name="Farmerie W.G."/>
            <person name="Folta K.M."/>
            <person name="Soltis D.E."/>
        </authorList>
    </citation>
    <scope>NUCLEOTIDE SEQUENCE [LARGE SCALE GENOMIC DNA]</scope>
</reference>
<comment type="subunit">
    <text evidence="1">Part of the 30S ribosomal subunit.</text>
</comment>
<comment type="subcellular location">
    <subcellularLocation>
        <location>Plastid</location>
        <location>Chloroplast</location>
    </subcellularLocation>
</comment>
<comment type="similarity">
    <text evidence="2">Belongs to the universal ribosomal protein uS15 family.</text>
</comment>
<sequence>MIKNPFISVISQEEKEENKGSVEYQILSFTNKIRRLTSHLELHRKDFLSQRGLRKILGKRQRLLAYLSKKNRVRYKELISQLDIREPKTR</sequence>
<feature type="chain" id="PRO_0000354268" description="Small ribosomal subunit protein uS15c">
    <location>
        <begin position="1"/>
        <end position="90"/>
    </location>
</feature>
<accession>Q09FQ3</accession>
<keyword id="KW-0150">Chloroplast</keyword>
<keyword id="KW-0934">Plastid</keyword>
<keyword id="KW-0687">Ribonucleoprotein</keyword>
<keyword id="KW-0689">Ribosomal protein</keyword>
<protein>
    <recommendedName>
        <fullName evidence="2">Small ribosomal subunit protein uS15c</fullName>
    </recommendedName>
    <alternativeName>
        <fullName>30S ribosomal protein S15, chloroplastic</fullName>
    </alternativeName>
</protein>
<dbReference type="EMBL" id="DQ923117">
    <property type="protein sequence ID" value="ABI49922.1"/>
    <property type="molecule type" value="Genomic_DNA"/>
</dbReference>
<dbReference type="RefSeq" id="YP_740708.1">
    <property type="nucleotide sequence ID" value="NC_008336.1"/>
</dbReference>
<dbReference type="SMR" id="Q09FQ3"/>
<dbReference type="GeneID" id="4271656"/>
<dbReference type="GO" id="GO:0009507">
    <property type="term" value="C:chloroplast"/>
    <property type="evidence" value="ECO:0007669"/>
    <property type="project" value="UniProtKB-SubCell"/>
</dbReference>
<dbReference type="GO" id="GO:1990904">
    <property type="term" value="C:ribonucleoprotein complex"/>
    <property type="evidence" value="ECO:0007669"/>
    <property type="project" value="UniProtKB-KW"/>
</dbReference>
<dbReference type="GO" id="GO:0005840">
    <property type="term" value="C:ribosome"/>
    <property type="evidence" value="ECO:0007669"/>
    <property type="project" value="UniProtKB-KW"/>
</dbReference>
<dbReference type="GO" id="GO:0003735">
    <property type="term" value="F:structural constituent of ribosome"/>
    <property type="evidence" value="ECO:0007669"/>
    <property type="project" value="InterPro"/>
</dbReference>
<dbReference type="GO" id="GO:0006412">
    <property type="term" value="P:translation"/>
    <property type="evidence" value="ECO:0007669"/>
    <property type="project" value="UniProtKB-UniRule"/>
</dbReference>
<dbReference type="CDD" id="cd00353">
    <property type="entry name" value="Ribosomal_S15p_S13e"/>
    <property type="match status" value="1"/>
</dbReference>
<dbReference type="Gene3D" id="1.10.287.10">
    <property type="entry name" value="S15/NS1, RNA-binding"/>
    <property type="match status" value="1"/>
</dbReference>
<dbReference type="HAMAP" id="MF_01343_B">
    <property type="entry name" value="Ribosomal_uS15_B"/>
    <property type="match status" value="1"/>
</dbReference>
<dbReference type="InterPro" id="IPR000589">
    <property type="entry name" value="Ribosomal_uS15"/>
</dbReference>
<dbReference type="InterPro" id="IPR005290">
    <property type="entry name" value="Ribosomal_uS15_bac-type"/>
</dbReference>
<dbReference type="InterPro" id="IPR009068">
    <property type="entry name" value="uS15_NS1_RNA-bd_sf"/>
</dbReference>
<dbReference type="NCBIfam" id="TIGR00952">
    <property type="entry name" value="S15_bact"/>
    <property type="match status" value="1"/>
</dbReference>
<dbReference type="PANTHER" id="PTHR23321">
    <property type="entry name" value="RIBOSOMAL PROTEIN S15, BACTERIAL AND ORGANELLAR"/>
    <property type="match status" value="1"/>
</dbReference>
<dbReference type="PANTHER" id="PTHR23321:SF26">
    <property type="entry name" value="SMALL RIBOSOMAL SUBUNIT PROTEIN US15M"/>
    <property type="match status" value="1"/>
</dbReference>
<dbReference type="Pfam" id="PF00312">
    <property type="entry name" value="Ribosomal_S15"/>
    <property type="match status" value="1"/>
</dbReference>
<dbReference type="SMART" id="SM01387">
    <property type="entry name" value="Ribosomal_S15"/>
    <property type="match status" value="1"/>
</dbReference>
<dbReference type="SUPFAM" id="SSF47060">
    <property type="entry name" value="S15/NS1 RNA-binding domain"/>
    <property type="match status" value="1"/>
</dbReference>
<dbReference type="PROSITE" id="PS00362">
    <property type="entry name" value="RIBOSOMAL_S15"/>
    <property type="match status" value="1"/>
</dbReference>
<proteinExistence type="inferred from homology"/>
<geneLocation type="chloroplast"/>
<evidence type="ECO:0000250" key="1"/>
<evidence type="ECO:0000305" key="2"/>
<organism>
    <name type="scientific">Nandina domestica</name>
    <name type="common">Heavenly bamboo</name>
    <dbReference type="NCBI Taxonomy" id="41776"/>
    <lineage>
        <taxon>Eukaryota</taxon>
        <taxon>Viridiplantae</taxon>
        <taxon>Streptophyta</taxon>
        <taxon>Embryophyta</taxon>
        <taxon>Tracheophyta</taxon>
        <taxon>Spermatophyta</taxon>
        <taxon>Magnoliopsida</taxon>
        <taxon>Ranunculales</taxon>
        <taxon>Berberidaceae</taxon>
        <taxon>Nandinoideae</taxon>
        <taxon>Nandineae</taxon>
        <taxon>Nandina</taxon>
    </lineage>
</organism>
<gene>
    <name type="primary">rps15</name>
</gene>
<name>RR15_NANDO</name>